<proteinExistence type="inferred from homology"/>
<dbReference type="EC" id="5.4.99.62" evidence="1"/>
<dbReference type="EMBL" id="CP000930">
    <property type="protein sequence ID" value="ABZ84967.1"/>
    <property type="molecule type" value="Genomic_DNA"/>
</dbReference>
<dbReference type="RefSeq" id="WP_012283464.1">
    <property type="nucleotide sequence ID" value="NC_010337.2"/>
</dbReference>
<dbReference type="SMR" id="B0TIM6"/>
<dbReference type="STRING" id="498761.HM1_2417"/>
<dbReference type="KEGG" id="hmo:HM1_2417"/>
<dbReference type="eggNOG" id="COG1869">
    <property type="taxonomic scope" value="Bacteria"/>
</dbReference>
<dbReference type="HOGENOM" id="CLU_135498_0_0_9"/>
<dbReference type="OrthoDB" id="9805009at2"/>
<dbReference type="UniPathway" id="UPA00916">
    <property type="reaction ID" value="UER00888"/>
</dbReference>
<dbReference type="Proteomes" id="UP000008550">
    <property type="component" value="Chromosome"/>
</dbReference>
<dbReference type="GO" id="GO:0005829">
    <property type="term" value="C:cytosol"/>
    <property type="evidence" value="ECO:0007669"/>
    <property type="project" value="TreeGrafter"/>
</dbReference>
<dbReference type="GO" id="GO:0062193">
    <property type="term" value="F:D-ribose pyranase activity"/>
    <property type="evidence" value="ECO:0007669"/>
    <property type="project" value="UniProtKB-EC"/>
</dbReference>
<dbReference type="GO" id="GO:0016872">
    <property type="term" value="F:intramolecular lyase activity"/>
    <property type="evidence" value="ECO:0007669"/>
    <property type="project" value="UniProtKB-UniRule"/>
</dbReference>
<dbReference type="GO" id="GO:0048029">
    <property type="term" value="F:monosaccharide binding"/>
    <property type="evidence" value="ECO:0007669"/>
    <property type="project" value="InterPro"/>
</dbReference>
<dbReference type="GO" id="GO:0019303">
    <property type="term" value="P:D-ribose catabolic process"/>
    <property type="evidence" value="ECO:0007669"/>
    <property type="project" value="UniProtKB-UniRule"/>
</dbReference>
<dbReference type="Gene3D" id="3.40.1650.10">
    <property type="entry name" value="RbsD-like domain"/>
    <property type="match status" value="1"/>
</dbReference>
<dbReference type="HAMAP" id="MF_01661">
    <property type="entry name" value="D_rib_pyranase"/>
    <property type="match status" value="1"/>
</dbReference>
<dbReference type="InterPro" id="IPR023064">
    <property type="entry name" value="D-ribose_pyranase"/>
</dbReference>
<dbReference type="InterPro" id="IPR023750">
    <property type="entry name" value="RbsD-like_sf"/>
</dbReference>
<dbReference type="InterPro" id="IPR007721">
    <property type="entry name" value="RbsD_FucU"/>
</dbReference>
<dbReference type="NCBIfam" id="NF008761">
    <property type="entry name" value="PRK11797.1"/>
    <property type="match status" value="1"/>
</dbReference>
<dbReference type="PANTHER" id="PTHR37831">
    <property type="entry name" value="D-RIBOSE PYRANASE"/>
    <property type="match status" value="1"/>
</dbReference>
<dbReference type="PANTHER" id="PTHR37831:SF1">
    <property type="entry name" value="D-RIBOSE PYRANASE"/>
    <property type="match status" value="1"/>
</dbReference>
<dbReference type="Pfam" id="PF05025">
    <property type="entry name" value="RbsD_FucU"/>
    <property type="match status" value="1"/>
</dbReference>
<dbReference type="SUPFAM" id="SSF102546">
    <property type="entry name" value="RbsD-like"/>
    <property type="match status" value="1"/>
</dbReference>
<accession>B0TIM6</accession>
<gene>
    <name evidence="1" type="primary">rbsD</name>
    <name type="ordered locus">Helmi_23420</name>
    <name type="ORF">HM1_2417</name>
</gene>
<keyword id="KW-0119">Carbohydrate metabolism</keyword>
<keyword id="KW-0963">Cytoplasm</keyword>
<keyword id="KW-0413">Isomerase</keyword>
<keyword id="KW-1185">Reference proteome</keyword>
<feature type="chain" id="PRO_0000346213" description="D-ribose pyranase">
    <location>
        <begin position="1"/>
        <end position="130"/>
    </location>
</feature>
<feature type="active site" description="Proton donor" evidence="1">
    <location>
        <position position="20"/>
    </location>
</feature>
<feature type="binding site" evidence="1">
    <location>
        <position position="28"/>
    </location>
    <ligand>
        <name>substrate</name>
    </ligand>
</feature>
<feature type="binding site" evidence="1">
    <location>
        <position position="97"/>
    </location>
    <ligand>
        <name>substrate</name>
    </ligand>
</feature>
<feature type="binding site" evidence="1">
    <location>
        <begin position="119"/>
        <end position="121"/>
    </location>
    <ligand>
        <name>substrate</name>
    </ligand>
</feature>
<protein>
    <recommendedName>
        <fullName evidence="1">D-ribose pyranase</fullName>
        <ecNumber evidence="1">5.4.99.62</ecNumber>
    </recommendedName>
</protein>
<sequence>MKKQGILHRDLAALIASLGHGDLVVVADSGLPVPPGVPCIDLAVTKGVPSFLPVLEAILSEMVVENATVAEELKPNEQIIEALAGRLKPVQLHFINHESLKTCCRQARAVIRTGEWTPYANILLYAGVAF</sequence>
<reference key="1">
    <citation type="journal article" date="2008" name="J. Bacteriol.">
        <title>The genome of Heliobacterium modesticaldum, a phototrophic representative of the Firmicutes containing the simplest photosynthetic apparatus.</title>
        <authorList>
            <person name="Sattley W.M."/>
            <person name="Madigan M.T."/>
            <person name="Swingley W.D."/>
            <person name="Cheung P.C."/>
            <person name="Clocksin K.M."/>
            <person name="Conrad A.L."/>
            <person name="Dejesa L.C."/>
            <person name="Honchak B.M."/>
            <person name="Jung D.O."/>
            <person name="Karbach L.E."/>
            <person name="Kurdoglu A."/>
            <person name="Lahiri S."/>
            <person name="Mastrian S.D."/>
            <person name="Page L.E."/>
            <person name="Taylor H.L."/>
            <person name="Wang Z.T."/>
            <person name="Raymond J."/>
            <person name="Chen M."/>
            <person name="Blankenship R.E."/>
            <person name="Touchman J.W."/>
        </authorList>
    </citation>
    <scope>NUCLEOTIDE SEQUENCE [LARGE SCALE GENOMIC DNA]</scope>
    <source>
        <strain>ATCC 51547 / Ice1</strain>
    </source>
</reference>
<organism>
    <name type="scientific">Heliobacterium modesticaldum (strain ATCC 51547 / Ice1)</name>
    <dbReference type="NCBI Taxonomy" id="498761"/>
    <lineage>
        <taxon>Bacteria</taxon>
        <taxon>Bacillati</taxon>
        <taxon>Bacillota</taxon>
        <taxon>Clostridia</taxon>
        <taxon>Eubacteriales</taxon>
        <taxon>Heliobacteriaceae</taxon>
        <taxon>Heliomicrobium</taxon>
    </lineage>
</organism>
<name>RBSD_HELMI</name>
<comment type="function">
    <text evidence="1">Catalyzes the interconversion of beta-pyran and beta-furan forms of D-ribose.</text>
</comment>
<comment type="catalytic activity">
    <reaction evidence="1">
        <text>beta-D-ribopyranose = beta-D-ribofuranose</text>
        <dbReference type="Rhea" id="RHEA:25432"/>
        <dbReference type="ChEBI" id="CHEBI:27476"/>
        <dbReference type="ChEBI" id="CHEBI:47002"/>
        <dbReference type="EC" id="5.4.99.62"/>
    </reaction>
</comment>
<comment type="pathway">
    <text evidence="1">Carbohydrate metabolism; D-ribose degradation; D-ribose 5-phosphate from beta-D-ribopyranose: step 1/2.</text>
</comment>
<comment type="subunit">
    <text evidence="1">Homodecamer.</text>
</comment>
<comment type="subcellular location">
    <subcellularLocation>
        <location evidence="1">Cytoplasm</location>
    </subcellularLocation>
</comment>
<comment type="similarity">
    <text evidence="1">Belongs to the RbsD / FucU family. RbsD subfamily.</text>
</comment>
<evidence type="ECO:0000255" key="1">
    <source>
        <dbReference type="HAMAP-Rule" id="MF_01661"/>
    </source>
</evidence>